<accession>P61487</accession>
<accession>Q90VX4</accession>
<gene>
    <name type="primary">rpl36a</name>
</gene>
<proteinExistence type="inferred from homology"/>
<organism>
    <name type="scientific">Ictalurus punctatus</name>
    <name type="common">Channel catfish</name>
    <name type="synonym">Silurus punctatus</name>
    <dbReference type="NCBI Taxonomy" id="7998"/>
    <lineage>
        <taxon>Eukaryota</taxon>
        <taxon>Metazoa</taxon>
        <taxon>Chordata</taxon>
        <taxon>Craniata</taxon>
        <taxon>Vertebrata</taxon>
        <taxon>Euteleostomi</taxon>
        <taxon>Actinopterygii</taxon>
        <taxon>Neopterygii</taxon>
        <taxon>Teleostei</taxon>
        <taxon>Ostariophysi</taxon>
        <taxon>Siluriformes</taxon>
        <taxon>Ictaluridae</taxon>
        <taxon>Ictalurus</taxon>
    </lineage>
</organism>
<evidence type="ECO:0000250" key="1"/>
<evidence type="ECO:0000250" key="2">
    <source>
        <dbReference type="UniProtKB" id="P83881"/>
    </source>
</evidence>
<evidence type="ECO:0000256" key="3">
    <source>
        <dbReference type="SAM" id="MobiDB-lite"/>
    </source>
</evidence>
<evidence type="ECO:0000305" key="4"/>
<protein>
    <recommendedName>
        <fullName evidence="4">Large ribosomal subunit protein eL42</fullName>
    </recommendedName>
    <alternativeName>
        <fullName>60S ribosomal protein L36a</fullName>
    </alternativeName>
</protein>
<sequence length="106" mass="12528">MVNVPKTRRTYCKKCKKHQPHKVTQYKKGKDSLYAQGKRRYDRKQSGYGGQTKPIFRKKAKTTKKIVLRLECVEPNCRSKRMLAIKRCKHFELGGDKKRKGQVIQF</sequence>
<reference key="1">
    <citation type="journal article" date="2003" name="Gene">
        <title>Translational machinery of channel catfish: II. Complementary DNA and expression of the complete set of 47 60S ribosomal proteins.</title>
        <authorList>
            <person name="Patterson A.P."/>
            <person name="Karsi A."/>
            <person name="Feng J."/>
            <person name="Liu Z.J."/>
        </authorList>
    </citation>
    <scope>NUCLEOTIDE SEQUENCE [MRNA]</scope>
</reference>
<dbReference type="EMBL" id="AF401592">
    <property type="protein sequence ID" value="AAK95164.1"/>
    <property type="molecule type" value="mRNA"/>
</dbReference>
<dbReference type="RefSeq" id="NP_001187060.1">
    <property type="nucleotide sequence ID" value="NM_001200131.1"/>
</dbReference>
<dbReference type="SMR" id="P61487"/>
<dbReference type="STRING" id="7998.ENSIPUP00000027350"/>
<dbReference type="Ensembl" id="ENSIPUT00015072146">
    <property type="protein sequence ID" value="ENSIPUP00015063424"/>
    <property type="gene ID" value="ENSIPUG00015028101"/>
</dbReference>
<dbReference type="GeneID" id="100304549"/>
<dbReference type="KEGG" id="ipu:100304549"/>
<dbReference type="CTD" id="6173"/>
<dbReference type="OMA" id="CKKHTIH"/>
<dbReference type="OrthoDB" id="2967263at2759"/>
<dbReference type="Proteomes" id="UP000221080">
    <property type="component" value="Chromosome 28"/>
</dbReference>
<dbReference type="GO" id="GO:0005737">
    <property type="term" value="C:cytoplasm"/>
    <property type="evidence" value="ECO:0007669"/>
    <property type="project" value="UniProtKB-SubCell"/>
</dbReference>
<dbReference type="GO" id="GO:1990904">
    <property type="term" value="C:ribonucleoprotein complex"/>
    <property type="evidence" value="ECO:0007669"/>
    <property type="project" value="UniProtKB-KW"/>
</dbReference>
<dbReference type="GO" id="GO:0005840">
    <property type="term" value="C:ribosome"/>
    <property type="evidence" value="ECO:0007669"/>
    <property type="project" value="UniProtKB-KW"/>
</dbReference>
<dbReference type="GO" id="GO:0003735">
    <property type="term" value="F:structural constituent of ribosome"/>
    <property type="evidence" value="ECO:0007669"/>
    <property type="project" value="InterPro"/>
</dbReference>
<dbReference type="GO" id="GO:0006412">
    <property type="term" value="P:translation"/>
    <property type="evidence" value="ECO:0007669"/>
    <property type="project" value="InterPro"/>
</dbReference>
<dbReference type="FunFam" id="3.10.450.80:FF:000001">
    <property type="entry name" value="60S ribosomal protein L44"/>
    <property type="match status" value="1"/>
</dbReference>
<dbReference type="Gene3D" id="3.10.450.80">
    <property type="match status" value="1"/>
</dbReference>
<dbReference type="InterPro" id="IPR000552">
    <property type="entry name" value="Ribosomal_eL44"/>
</dbReference>
<dbReference type="InterPro" id="IPR053708">
    <property type="entry name" value="Ribosomal_LSU_eL42"/>
</dbReference>
<dbReference type="InterPro" id="IPR011332">
    <property type="entry name" value="Ribosomal_zn-bd"/>
</dbReference>
<dbReference type="PANTHER" id="PTHR10369">
    <property type="entry name" value="60S RIBOSOMAL PROTEIN L36A/L44"/>
    <property type="match status" value="1"/>
</dbReference>
<dbReference type="Pfam" id="PF00935">
    <property type="entry name" value="Ribosomal_L44"/>
    <property type="match status" value="1"/>
</dbReference>
<dbReference type="SUPFAM" id="SSF57829">
    <property type="entry name" value="Zn-binding ribosomal proteins"/>
    <property type="match status" value="1"/>
</dbReference>
<dbReference type="PROSITE" id="PS01172">
    <property type="entry name" value="RIBOSOMAL_L44E"/>
    <property type="match status" value="1"/>
</dbReference>
<keyword id="KW-0963">Cytoplasm</keyword>
<keyword id="KW-0687">Ribonucleoprotein</keyword>
<keyword id="KW-0689">Ribosomal protein</keyword>
<comment type="function">
    <text evidence="2">Component of the large ribosomal subunit. The ribosome is a large ribonucleoprotein complex responsible for the synthesis of proteins in the cell.</text>
</comment>
<comment type="subunit">
    <text evidence="2">Component of the large ribosomal subunit.</text>
</comment>
<comment type="subcellular location">
    <subcellularLocation>
        <location evidence="2">Cytoplasm</location>
    </subcellularLocation>
</comment>
<comment type="similarity">
    <text evidence="4">Belongs to the eukaryotic ribosomal protein eL42 family.</text>
</comment>
<feature type="initiator methionine" description="Removed" evidence="1">
    <location>
        <position position="1"/>
    </location>
</feature>
<feature type="chain" id="PRO_0000149125" description="Large ribosomal subunit protein eL42">
    <location>
        <begin position="2"/>
        <end position="106"/>
    </location>
</feature>
<feature type="region of interest" description="Disordered" evidence="3">
    <location>
        <begin position="26"/>
        <end position="53"/>
    </location>
</feature>
<name>RL36A_ICTPU</name>